<feature type="signal peptide" evidence="1">
    <location>
        <begin position="1"/>
        <end position="24"/>
    </location>
</feature>
<feature type="propeptide" id="PRO_0000418370" evidence="1">
    <location>
        <begin position="25"/>
        <end position="41"/>
    </location>
</feature>
<feature type="chain" id="PRO_0000418371" description="Galactose oxidase">
    <location>
        <begin position="42"/>
        <end position="680"/>
    </location>
</feature>
<feature type="domain" description="F5/8 type C" evidence="2">
    <location>
        <begin position="42"/>
        <end position="189"/>
    </location>
</feature>
<feature type="repeat" description="Kelch 1">
    <location>
        <begin position="223"/>
        <end position="268"/>
    </location>
</feature>
<feature type="repeat" description="Kelch 2">
    <location>
        <begin position="279"/>
        <end position="321"/>
    </location>
</feature>
<feature type="repeat" description="Kelch 3">
    <location>
        <begin position="323"/>
        <end position="372"/>
    </location>
</feature>
<feature type="repeat" description="Kelch 4">
    <location>
        <begin position="436"/>
        <end position="490"/>
    </location>
</feature>
<feature type="repeat" description="Kelch 5">
    <location>
        <begin position="492"/>
        <end position="544"/>
    </location>
</feature>
<feature type="active site" description="Proton acceptor" evidence="1">
    <location>
        <position position="536"/>
    </location>
</feature>
<feature type="binding site" evidence="1">
    <location>
        <position position="313"/>
    </location>
    <ligand>
        <name>Cu cation</name>
        <dbReference type="ChEBI" id="CHEBI:23378"/>
    </ligand>
</feature>
<feature type="binding site" evidence="1">
    <location>
        <position position="536"/>
    </location>
    <ligand>
        <name>Cu cation</name>
        <dbReference type="ChEBI" id="CHEBI:23378"/>
    </ligand>
</feature>
<feature type="binding site" evidence="1">
    <location>
        <position position="537"/>
    </location>
    <ligand>
        <name>Cu cation</name>
        <dbReference type="ChEBI" id="CHEBI:23378"/>
    </ligand>
</feature>
<feature type="binding site" evidence="1">
    <location>
        <position position="622"/>
    </location>
    <ligand>
        <name>Cu cation</name>
        <dbReference type="ChEBI" id="CHEBI:23378"/>
    </ligand>
</feature>
<feature type="disulfide bond" evidence="2">
    <location>
        <begin position="59"/>
        <end position="68"/>
    </location>
</feature>
<feature type="disulfide bond" evidence="2">
    <location>
        <begin position="556"/>
        <end position="559"/>
    </location>
</feature>
<feature type="cross-link" description="3'-(S-cysteinyl)-tyrosine (Cys-Tyr)" evidence="1">
    <location>
        <begin position="269"/>
        <end position="313"/>
    </location>
</feature>
<protein>
    <recommendedName>
        <fullName>Galactose oxidase</fullName>
        <shortName>GAO</shortName>
        <shortName>GO</shortName>
        <shortName>GOase</shortName>
        <ecNumber>1.1.3.9</ecNumber>
    </recommendedName>
</protein>
<reference key="1">
    <citation type="journal article" date="2007" name="Science">
        <title>The Fusarium graminearum genome reveals a link between localized polymorphism and pathogen specialization.</title>
        <authorList>
            <person name="Cuomo C.A."/>
            <person name="Gueldener U."/>
            <person name="Xu J.-R."/>
            <person name="Trail F."/>
            <person name="Turgeon B.G."/>
            <person name="Di Pietro A."/>
            <person name="Walton J.D."/>
            <person name="Ma L.-J."/>
            <person name="Baker S.E."/>
            <person name="Rep M."/>
            <person name="Adam G."/>
            <person name="Antoniw J."/>
            <person name="Baldwin T."/>
            <person name="Calvo S.E."/>
            <person name="Chang Y.-L."/>
            <person name="DeCaprio D."/>
            <person name="Gale L.R."/>
            <person name="Gnerre S."/>
            <person name="Goswami R.S."/>
            <person name="Hammond-Kosack K."/>
            <person name="Harris L.J."/>
            <person name="Hilburn K."/>
            <person name="Kennell J.C."/>
            <person name="Kroken S."/>
            <person name="Magnuson J.K."/>
            <person name="Mannhaupt G."/>
            <person name="Mauceli E.W."/>
            <person name="Mewes H.-W."/>
            <person name="Mitterbauer R."/>
            <person name="Muehlbauer G."/>
            <person name="Muensterkoetter M."/>
            <person name="Nelson D."/>
            <person name="O'Donnell K."/>
            <person name="Ouellet T."/>
            <person name="Qi W."/>
            <person name="Quesneville H."/>
            <person name="Roncero M.I.G."/>
            <person name="Seong K.-Y."/>
            <person name="Tetko I.V."/>
            <person name="Urban M."/>
            <person name="Waalwijk C."/>
            <person name="Ward T.J."/>
            <person name="Yao J."/>
            <person name="Birren B.W."/>
            <person name="Kistler H.C."/>
        </authorList>
    </citation>
    <scope>NUCLEOTIDE SEQUENCE [LARGE SCALE GENOMIC DNA]</scope>
    <source>
        <strain>ATCC MYA-4620 / CBS 123657 / FGSC 9075 / NRRL 31084 / PH-1</strain>
    </source>
</reference>
<reference key="2">
    <citation type="journal article" date="2010" name="Nature">
        <title>Comparative genomics reveals mobile pathogenicity chromosomes in Fusarium.</title>
        <authorList>
            <person name="Ma L.-J."/>
            <person name="van der Does H.C."/>
            <person name="Borkovich K.A."/>
            <person name="Coleman J.J."/>
            <person name="Daboussi M.-J."/>
            <person name="Di Pietro A."/>
            <person name="Dufresne M."/>
            <person name="Freitag M."/>
            <person name="Grabherr M."/>
            <person name="Henrissat B."/>
            <person name="Houterman P.M."/>
            <person name="Kang S."/>
            <person name="Shim W.-B."/>
            <person name="Woloshuk C."/>
            <person name="Xie X."/>
            <person name="Xu J.-R."/>
            <person name="Antoniw J."/>
            <person name="Baker S.E."/>
            <person name="Bluhm B.H."/>
            <person name="Breakspear A."/>
            <person name="Brown D.W."/>
            <person name="Butchko R.A.E."/>
            <person name="Chapman S."/>
            <person name="Coulson R."/>
            <person name="Coutinho P.M."/>
            <person name="Danchin E.G.J."/>
            <person name="Diener A."/>
            <person name="Gale L.R."/>
            <person name="Gardiner D.M."/>
            <person name="Goff S."/>
            <person name="Hammond-Kosack K.E."/>
            <person name="Hilburn K."/>
            <person name="Hua-Van A."/>
            <person name="Jonkers W."/>
            <person name="Kazan K."/>
            <person name="Kodira C.D."/>
            <person name="Koehrsen M."/>
            <person name="Kumar L."/>
            <person name="Lee Y.-H."/>
            <person name="Li L."/>
            <person name="Manners J.M."/>
            <person name="Miranda-Saavedra D."/>
            <person name="Mukherjee M."/>
            <person name="Park G."/>
            <person name="Park J."/>
            <person name="Park S.-Y."/>
            <person name="Proctor R.H."/>
            <person name="Regev A."/>
            <person name="Ruiz-Roldan M.C."/>
            <person name="Sain D."/>
            <person name="Sakthikumar S."/>
            <person name="Sykes S."/>
            <person name="Schwartz D.C."/>
            <person name="Turgeon B.G."/>
            <person name="Wapinski I."/>
            <person name="Yoder O."/>
            <person name="Young S."/>
            <person name="Zeng Q."/>
            <person name="Zhou S."/>
            <person name="Galagan J."/>
            <person name="Cuomo C.A."/>
            <person name="Kistler H.C."/>
            <person name="Rep M."/>
        </authorList>
    </citation>
    <scope>GENOME REANNOTATION</scope>
    <source>
        <strain>ATCC MYA-4620 / CBS 123657 / FGSC 9075 / NRRL 31084 / PH-1</strain>
    </source>
</reference>
<reference key="3">
    <citation type="journal article" date="2015" name="BMC Genomics">
        <title>The completed genome sequence of the pathogenic ascomycete fungus Fusarium graminearum.</title>
        <authorList>
            <person name="King R."/>
            <person name="Urban M."/>
            <person name="Hammond-Kosack M.C.U."/>
            <person name="Hassani-Pak K."/>
            <person name="Hammond-Kosack K.E."/>
        </authorList>
    </citation>
    <scope>NUCLEOTIDE SEQUENCE [LARGE SCALE GENOMIC DNA]</scope>
    <source>
        <strain>ATCC MYA-4620 / CBS 123657 / FGSC 9075 / NRRL 31084 / PH-1</strain>
    </source>
</reference>
<sequence>MKHFLSLALCFSSINAVAVTVPHKSGGTGSPEGSLQFLSLRASAPIGSAISRNNWAVTCDSAQSGNECNKAIDGNKDTFWHTFYGANGDPKPPHTYTIDMKTTQNVNGLSMLPRQDGNQNGWIGRHEVYLSSDGTNWGSPVASGSWFADSTTKYSNFETRPARYVRLVAVTEANGQPWTSIAEINVFQASSYTAPQPGLGRWGPTIDLPIVPAAAAIEPTSGRVLMWSSYRNDAFGGSPGGITLTSSWDPSTGIVSDRTVTVTKHDMFCPGISMDGNGQIVVTGGNDAKKTSLYDSSSDSWIPGPDMQVARGYQSSATMSDGRVFTIGGSWSGGVFEKNGEVYSPSSKTWTSLPNAKVNPMLTADKQGLYRSDNHAWLFGWKKGSVFQAGPSTAMNWYYTSGSGDVKSAGKRQSNRGVAPDAMCGNAVMYDAVKGKILTFGGSPDYQDSDATTNAHIITLGEPGTSPNTVFASNGLYFARTFHTSVVLPDGSTFITGGQRRGIPFEDSTPVFTPEIYVPEQDTFYKQNPNSIVRVYHSISLLLPDGRVFNGGGGLCGDCTTNHFDAQIFTPNYLYNSNGNLATRPKITRTSTQSVKVGGRITISTDSSITKASLIRYGTATHTVNTDQRRIPLTLTNNGGNSYSFQVPSDSGVALPGYWMLFVMNSAGVPSVASTIRVTQ</sequence>
<gene>
    <name type="primary">GAOA</name>
    <name type="ORF">FGRRES_11032</name>
    <name type="ORF">FGSG_11032</name>
</gene>
<dbReference type="EC" id="1.1.3.9"/>
<dbReference type="EMBL" id="DS231670">
    <property type="protein sequence ID" value="ESU17707.1"/>
    <property type="molecule type" value="Genomic_DNA"/>
</dbReference>
<dbReference type="EMBL" id="HG970334">
    <property type="protein sequence ID" value="CEF87161.1"/>
    <property type="molecule type" value="Genomic_DNA"/>
</dbReference>
<dbReference type="RefSeq" id="XP_011325329.1">
    <property type="nucleotide sequence ID" value="XM_011327027.1"/>
</dbReference>
<dbReference type="SMR" id="I1S2N3"/>
<dbReference type="STRING" id="229533.I1S2N3"/>
<dbReference type="GeneID" id="23557903"/>
<dbReference type="KEGG" id="fgr:FGSG_11032"/>
<dbReference type="VEuPathDB" id="FungiDB:FGRAMPH1_01G21069"/>
<dbReference type="eggNOG" id="ENOG502SCD5">
    <property type="taxonomic scope" value="Eukaryota"/>
</dbReference>
<dbReference type="HOGENOM" id="CLU_013444_1_1_1"/>
<dbReference type="InParanoid" id="I1S2N3"/>
<dbReference type="OrthoDB" id="57710at110618"/>
<dbReference type="Proteomes" id="UP000070720">
    <property type="component" value="Chromosome 3"/>
</dbReference>
<dbReference type="GO" id="GO:0005576">
    <property type="term" value="C:extracellular region"/>
    <property type="evidence" value="ECO:0007669"/>
    <property type="project" value="UniProtKB-SubCell"/>
</dbReference>
<dbReference type="GO" id="GO:0045480">
    <property type="term" value="F:galactose oxidase activity"/>
    <property type="evidence" value="ECO:0007669"/>
    <property type="project" value="UniProtKB-EC"/>
</dbReference>
<dbReference type="GO" id="GO:0046872">
    <property type="term" value="F:metal ion binding"/>
    <property type="evidence" value="ECO:0007669"/>
    <property type="project" value="UniProtKB-KW"/>
</dbReference>
<dbReference type="CDD" id="cd02851">
    <property type="entry name" value="E_set_GO_C"/>
    <property type="match status" value="1"/>
</dbReference>
<dbReference type="CDD" id="cd00057">
    <property type="entry name" value="FA58C"/>
    <property type="match status" value="1"/>
</dbReference>
<dbReference type="Gene3D" id="2.130.10.80">
    <property type="entry name" value="Galactose oxidase/kelch, beta-propeller"/>
    <property type="match status" value="1"/>
</dbReference>
<dbReference type="Gene3D" id="2.60.120.260">
    <property type="entry name" value="Galactose-binding domain-like"/>
    <property type="match status" value="1"/>
</dbReference>
<dbReference type="Gene3D" id="2.60.40.10">
    <property type="entry name" value="Immunoglobulins"/>
    <property type="match status" value="1"/>
</dbReference>
<dbReference type="InterPro" id="IPR000421">
    <property type="entry name" value="FA58C"/>
</dbReference>
<dbReference type="InterPro" id="IPR011043">
    <property type="entry name" value="Gal_Oxase/kelch_b-propeller"/>
</dbReference>
<dbReference type="InterPro" id="IPR037293">
    <property type="entry name" value="Gal_Oxidase_central_sf"/>
</dbReference>
<dbReference type="InterPro" id="IPR008979">
    <property type="entry name" value="Galactose-bd-like_sf"/>
</dbReference>
<dbReference type="InterPro" id="IPR015202">
    <property type="entry name" value="GO-like_E_set"/>
</dbReference>
<dbReference type="InterPro" id="IPR013783">
    <property type="entry name" value="Ig-like_fold"/>
</dbReference>
<dbReference type="InterPro" id="IPR014756">
    <property type="entry name" value="Ig_E-set"/>
</dbReference>
<dbReference type="InterPro" id="IPR006652">
    <property type="entry name" value="Kelch_1"/>
</dbReference>
<dbReference type="PANTHER" id="PTHR32208:SF68">
    <property type="entry name" value="GALACTOSE OXIDASE"/>
    <property type="match status" value="1"/>
</dbReference>
<dbReference type="PANTHER" id="PTHR32208">
    <property type="entry name" value="SECRETED PROTEIN-RELATED"/>
    <property type="match status" value="1"/>
</dbReference>
<dbReference type="Pfam" id="PF00754">
    <property type="entry name" value="F5_F8_type_C"/>
    <property type="match status" value="1"/>
</dbReference>
<dbReference type="Pfam" id="PF09118">
    <property type="entry name" value="GO-like_E_set"/>
    <property type="match status" value="1"/>
</dbReference>
<dbReference type="Pfam" id="PF01344">
    <property type="entry name" value="Kelch_1"/>
    <property type="match status" value="1"/>
</dbReference>
<dbReference type="SMART" id="SM00231">
    <property type="entry name" value="FA58C"/>
    <property type="match status" value="1"/>
</dbReference>
<dbReference type="SMART" id="SM00612">
    <property type="entry name" value="Kelch"/>
    <property type="match status" value="3"/>
</dbReference>
<dbReference type="SUPFAM" id="SSF81296">
    <property type="entry name" value="E set domains"/>
    <property type="match status" value="1"/>
</dbReference>
<dbReference type="SUPFAM" id="SSF50965">
    <property type="entry name" value="Galactose oxidase, central domain"/>
    <property type="match status" value="1"/>
</dbReference>
<dbReference type="SUPFAM" id="SSF49785">
    <property type="entry name" value="Galactose-binding domain-like"/>
    <property type="match status" value="1"/>
</dbReference>
<dbReference type="PROSITE" id="PS50022">
    <property type="entry name" value="FA58C_3"/>
    <property type="match status" value="1"/>
</dbReference>
<organism>
    <name type="scientific">Gibberella zeae (strain ATCC MYA-4620 / CBS 123657 / FGSC 9075 / NRRL 31084 / PH-1)</name>
    <name type="common">Wheat head blight fungus</name>
    <name type="synonym">Fusarium graminearum</name>
    <dbReference type="NCBI Taxonomy" id="229533"/>
    <lineage>
        <taxon>Eukaryota</taxon>
        <taxon>Fungi</taxon>
        <taxon>Dikarya</taxon>
        <taxon>Ascomycota</taxon>
        <taxon>Pezizomycotina</taxon>
        <taxon>Sordariomycetes</taxon>
        <taxon>Hypocreomycetidae</taxon>
        <taxon>Hypocreales</taxon>
        <taxon>Nectriaceae</taxon>
        <taxon>Fusarium</taxon>
    </lineage>
</organism>
<proteinExistence type="inferred from homology"/>
<accession>I1S2N3</accession>
<accession>A0A098DZ82</accession>
<accession>A0A0E0SL48</accession>
<accession>O43098</accession>
<accession>Q01745</accession>
<accession>Q4HVH6</accession>
<accession>V6RUL9</accession>
<evidence type="ECO:0000250" key="1"/>
<evidence type="ECO:0000255" key="2">
    <source>
        <dbReference type="PROSITE-ProRule" id="PRU00081"/>
    </source>
</evidence>
<comment type="function">
    <text evidence="1">Catalyzes the sterospecific oxidation of primary alcohols to the corresponding aldehydes. The biologically relevant substrate of the enzyme is not known as the enzyme exhibits broad substrate specificity from small alcohols through sugars to oligo- and polysaccharides (By similarity).</text>
</comment>
<comment type="catalytic activity">
    <reaction>
        <text>D-galactose + O2 = D-galacto-hexodialdose + H2O2</text>
        <dbReference type="Rhea" id="RHEA:24160"/>
        <dbReference type="ChEBI" id="CHEBI:4139"/>
        <dbReference type="ChEBI" id="CHEBI:15379"/>
        <dbReference type="ChEBI" id="CHEBI:16222"/>
        <dbReference type="ChEBI" id="CHEBI:16240"/>
        <dbReference type="EC" id="1.1.3.9"/>
    </reaction>
</comment>
<comment type="cofactor">
    <cofactor evidence="1">
        <name>Cu(2+)</name>
        <dbReference type="ChEBI" id="CHEBI:29036"/>
    </cofactor>
    <text evidence="1">Binds 1 Cu(2+) ion per subunit.</text>
</comment>
<comment type="subunit">
    <text evidence="1">Monomer.</text>
</comment>
<comment type="subcellular location">
    <subcellularLocation>
        <location evidence="1">Secreted</location>
    </subcellularLocation>
</comment>
<comment type="PTM">
    <text evidence="1">Galactose oxidase contains a protein-derived free radical cofactor (By similarity). In the active state, Tyr-313, which is cross-linked to Cys-269 via a thioether bond, is oxidized to a radical and acts with Cu(2+) as a two-electron acceptor in the oxidation reaction. The cross-link is believed to modulate the redox potential of the tyrosyl radical, which is further stabilized by a stacking interaction with Trp-331 in the active site. The post-translational formation of the cross-link is closely linked to the propeptide cleavage event, and both are copper-dependent, autocatalytic processes. The propeptide may act as an intramolecular chaperone, facilitating thioester bond formation and copper binding by positioning of active-site residues, including copper ligands (By similarity).</text>
</comment>
<comment type="online information" name="Worthington enzyme manual">
    <link uri="https://www.worthington-biochem.com/GAO/"/>
</comment>
<keyword id="KW-0186">Copper</keyword>
<keyword id="KW-1015">Disulfide bond</keyword>
<keyword id="KW-0880">Kelch repeat</keyword>
<keyword id="KW-0479">Metal-binding</keyword>
<keyword id="KW-0560">Oxidoreductase</keyword>
<keyword id="KW-1185">Reference proteome</keyword>
<keyword id="KW-0677">Repeat</keyword>
<keyword id="KW-0964">Secreted</keyword>
<keyword id="KW-0732">Signal</keyword>
<keyword id="KW-0883">Thioether bond</keyword>
<name>GAOA_GIBZE</name>